<accession>A6VUT8</accession>
<evidence type="ECO:0000255" key="1">
    <source>
        <dbReference type="HAMAP-Rule" id="MF_00823"/>
    </source>
</evidence>
<evidence type="ECO:0000255" key="2">
    <source>
        <dbReference type="PROSITE-ProRule" id="PRU01137"/>
    </source>
</evidence>
<reference key="1">
    <citation type="submission" date="2007-06" db="EMBL/GenBank/DDBJ databases">
        <title>Complete sequence of Marinomonas sp. MWYL1.</title>
        <authorList>
            <consortium name="US DOE Joint Genome Institute"/>
            <person name="Copeland A."/>
            <person name="Lucas S."/>
            <person name="Lapidus A."/>
            <person name="Barry K."/>
            <person name="Glavina del Rio T."/>
            <person name="Dalin E."/>
            <person name="Tice H."/>
            <person name="Pitluck S."/>
            <person name="Kiss H."/>
            <person name="Brettin T."/>
            <person name="Bruce D."/>
            <person name="Detter J.C."/>
            <person name="Han C."/>
            <person name="Schmutz J."/>
            <person name="Larimer F."/>
            <person name="Land M."/>
            <person name="Hauser L."/>
            <person name="Kyrpides N."/>
            <person name="Kim E."/>
            <person name="Johnston A.W.B."/>
            <person name="Todd J.D."/>
            <person name="Rogers R."/>
            <person name="Wexler M."/>
            <person name="Bond P.L."/>
            <person name="Li Y."/>
            <person name="Richardson P."/>
        </authorList>
    </citation>
    <scope>NUCLEOTIDE SEQUENCE [LARGE SCALE GENOMIC DNA]</scope>
    <source>
        <strain>MWYL1</strain>
    </source>
</reference>
<sequence>MNLDYLPFEQPIAELEQKIEELRLVGNDNELNISDEISRLEDKKIALTKSLFSNLGAWEVSQLARHPKRPYTLDYIKHVFTDFEEMHGDRHYADDRAIVGGIARLDGRPVMVIGHQKGREVKEKVLRNFGMPRPEGYRKALRLMETAERFNMPIVTLIDTPGAYPGIGAEERGQSEAIAFNLAVMSRLKTPIISTVIGEGGSGGALAIGVCDELMMLQYGTYSVISPEGCASILWKSADRASDAAKAMGITAQRLQELGFVDTIIQEPLGGAHISHEEMAQSLKKNVLAALDRMEALTTEELLARRYNRLMSYGL</sequence>
<organism>
    <name type="scientific">Marinomonas sp. (strain MWYL1)</name>
    <dbReference type="NCBI Taxonomy" id="400668"/>
    <lineage>
        <taxon>Bacteria</taxon>
        <taxon>Pseudomonadati</taxon>
        <taxon>Pseudomonadota</taxon>
        <taxon>Gammaproteobacteria</taxon>
        <taxon>Oceanospirillales</taxon>
        <taxon>Oceanospirillaceae</taxon>
        <taxon>Marinomonas</taxon>
    </lineage>
</organism>
<protein>
    <recommendedName>
        <fullName evidence="1">Acetyl-coenzyme A carboxylase carboxyl transferase subunit alpha</fullName>
        <shortName evidence="1">ACCase subunit alpha</shortName>
        <shortName evidence="1">Acetyl-CoA carboxylase carboxyltransferase subunit alpha</shortName>
        <ecNumber evidence="1">2.1.3.15</ecNumber>
    </recommendedName>
</protein>
<name>ACCA_MARMS</name>
<proteinExistence type="inferred from homology"/>
<keyword id="KW-0067">ATP-binding</keyword>
<keyword id="KW-0963">Cytoplasm</keyword>
<keyword id="KW-0275">Fatty acid biosynthesis</keyword>
<keyword id="KW-0276">Fatty acid metabolism</keyword>
<keyword id="KW-0444">Lipid biosynthesis</keyword>
<keyword id="KW-0443">Lipid metabolism</keyword>
<keyword id="KW-0547">Nucleotide-binding</keyword>
<keyword id="KW-0808">Transferase</keyword>
<dbReference type="EC" id="2.1.3.15" evidence="1"/>
<dbReference type="EMBL" id="CP000749">
    <property type="protein sequence ID" value="ABR70217.1"/>
    <property type="molecule type" value="Genomic_DNA"/>
</dbReference>
<dbReference type="SMR" id="A6VUT8"/>
<dbReference type="STRING" id="400668.Mmwyl1_1288"/>
<dbReference type="KEGG" id="mmw:Mmwyl1_1288"/>
<dbReference type="eggNOG" id="COG0825">
    <property type="taxonomic scope" value="Bacteria"/>
</dbReference>
<dbReference type="HOGENOM" id="CLU_015486_0_2_6"/>
<dbReference type="OrthoDB" id="9808023at2"/>
<dbReference type="UniPathway" id="UPA00655">
    <property type="reaction ID" value="UER00711"/>
</dbReference>
<dbReference type="GO" id="GO:0009317">
    <property type="term" value="C:acetyl-CoA carboxylase complex"/>
    <property type="evidence" value="ECO:0007669"/>
    <property type="project" value="InterPro"/>
</dbReference>
<dbReference type="GO" id="GO:0003989">
    <property type="term" value="F:acetyl-CoA carboxylase activity"/>
    <property type="evidence" value="ECO:0007669"/>
    <property type="project" value="InterPro"/>
</dbReference>
<dbReference type="GO" id="GO:0005524">
    <property type="term" value="F:ATP binding"/>
    <property type="evidence" value="ECO:0007669"/>
    <property type="project" value="UniProtKB-KW"/>
</dbReference>
<dbReference type="GO" id="GO:0016743">
    <property type="term" value="F:carboxyl- or carbamoyltransferase activity"/>
    <property type="evidence" value="ECO:0007669"/>
    <property type="project" value="UniProtKB-UniRule"/>
</dbReference>
<dbReference type="GO" id="GO:0006633">
    <property type="term" value="P:fatty acid biosynthetic process"/>
    <property type="evidence" value="ECO:0007669"/>
    <property type="project" value="UniProtKB-KW"/>
</dbReference>
<dbReference type="GO" id="GO:2001295">
    <property type="term" value="P:malonyl-CoA biosynthetic process"/>
    <property type="evidence" value="ECO:0007669"/>
    <property type="project" value="UniProtKB-UniRule"/>
</dbReference>
<dbReference type="FunFam" id="3.90.226.10:FF:000008">
    <property type="entry name" value="Acetyl-coenzyme A carboxylase carboxyl transferase subunit alpha"/>
    <property type="match status" value="1"/>
</dbReference>
<dbReference type="Gene3D" id="3.90.226.10">
    <property type="entry name" value="2-enoyl-CoA Hydratase, Chain A, domain 1"/>
    <property type="match status" value="1"/>
</dbReference>
<dbReference type="HAMAP" id="MF_00823">
    <property type="entry name" value="AcetylCoA_CT_alpha"/>
    <property type="match status" value="1"/>
</dbReference>
<dbReference type="InterPro" id="IPR001095">
    <property type="entry name" value="Acetyl_CoA_COase_a_su"/>
</dbReference>
<dbReference type="InterPro" id="IPR029045">
    <property type="entry name" value="ClpP/crotonase-like_dom_sf"/>
</dbReference>
<dbReference type="InterPro" id="IPR011763">
    <property type="entry name" value="COA_CT_C"/>
</dbReference>
<dbReference type="NCBIfam" id="TIGR00513">
    <property type="entry name" value="accA"/>
    <property type="match status" value="1"/>
</dbReference>
<dbReference type="NCBIfam" id="NF041504">
    <property type="entry name" value="AccA_sub"/>
    <property type="match status" value="1"/>
</dbReference>
<dbReference type="NCBIfam" id="NF004344">
    <property type="entry name" value="PRK05724.1"/>
    <property type="match status" value="1"/>
</dbReference>
<dbReference type="PANTHER" id="PTHR42853">
    <property type="entry name" value="ACETYL-COENZYME A CARBOXYLASE CARBOXYL TRANSFERASE SUBUNIT ALPHA"/>
    <property type="match status" value="1"/>
</dbReference>
<dbReference type="PANTHER" id="PTHR42853:SF3">
    <property type="entry name" value="ACETYL-COENZYME A CARBOXYLASE CARBOXYL TRANSFERASE SUBUNIT ALPHA, CHLOROPLASTIC"/>
    <property type="match status" value="1"/>
</dbReference>
<dbReference type="Pfam" id="PF03255">
    <property type="entry name" value="ACCA"/>
    <property type="match status" value="1"/>
</dbReference>
<dbReference type="PRINTS" id="PR01069">
    <property type="entry name" value="ACCCTRFRASEA"/>
</dbReference>
<dbReference type="SUPFAM" id="SSF52096">
    <property type="entry name" value="ClpP/crotonase"/>
    <property type="match status" value="1"/>
</dbReference>
<dbReference type="PROSITE" id="PS50989">
    <property type="entry name" value="COA_CT_CTER"/>
    <property type="match status" value="1"/>
</dbReference>
<gene>
    <name evidence="1" type="primary">accA</name>
    <name type="ordered locus">Mmwyl1_1288</name>
</gene>
<comment type="function">
    <text evidence="1">Component of the acetyl coenzyme A carboxylase (ACC) complex. First, biotin carboxylase catalyzes the carboxylation of biotin on its carrier protein (BCCP) and then the CO(2) group is transferred by the carboxyltransferase to acetyl-CoA to form malonyl-CoA.</text>
</comment>
<comment type="catalytic activity">
    <reaction evidence="1">
        <text>N(6)-carboxybiotinyl-L-lysyl-[protein] + acetyl-CoA = N(6)-biotinyl-L-lysyl-[protein] + malonyl-CoA</text>
        <dbReference type="Rhea" id="RHEA:54728"/>
        <dbReference type="Rhea" id="RHEA-COMP:10505"/>
        <dbReference type="Rhea" id="RHEA-COMP:10506"/>
        <dbReference type="ChEBI" id="CHEBI:57288"/>
        <dbReference type="ChEBI" id="CHEBI:57384"/>
        <dbReference type="ChEBI" id="CHEBI:83144"/>
        <dbReference type="ChEBI" id="CHEBI:83145"/>
        <dbReference type="EC" id="2.1.3.15"/>
    </reaction>
</comment>
<comment type="pathway">
    <text evidence="1">Lipid metabolism; malonyl-CoA biosynthesis; malonyl-CoA from acetyl-CoA: step 1/1.</text>
</comment>
<comment type="subunit">
    <text evidence="1">Acetyl-CoA carboxylase is a heterohexamer composed of biotin carboxyl carrier protein (AccB), biotin carboxylase (AccC) and two subunits each of ACCase subunit alpha (AccA) and ACCase subunit beta (AccD).</text>
</comment>
<comment type="subcellular location">
    <subcellularLocation>
        <location evidence="1">Cytoplasm</location>
    </subcellularLocation>
</comment>
<comment type="similarity">
    <text evidence="1">Belongs to the AccA family.</text>
</comment>
<feature type="chain" id="PRO_1000083930" description="Acetyl-coenzyme A carboxylase carboxyl transferase subunit alpha">
    <location>
        <begin position="1"/>
        <end position="315"/>
    </location>
</feature>
<feature type="domain" description="CoA carboxyltransferase C-terminal" evidence="2">
    <location>
        <begin position="40"/>
        <end position="293"/>
    </location>
</feature>